<keyword id="KW-0227">DNA damage</keyword>
<keyword id="KW-0233">DNA recombination</keyword>
<keyword id="KW-0234">DNA repair</keyword>
<evidence type="ECO:0000255" key="1">
    <source>
        <dbReference type="HAMAP-Rule" id="MF_00201"/>
    </source>
</evidence>
<gene>
    <name evidence="1" type="primary">recO</name>
    <name type="ordered locus">SAS1504</name>
</gene>
<name>RECO_STAAS</name>
<proteinExistence type="inferred from homology"/>
<dbReference type="EMBL" id="BX571857">
    <property type="protein sequence ID" value="CAG43305.1"/>
    <property type="molecule type" value="Genomic_DNA"/>
</dbReference>
<dbReference type="SMR" id="Q6G901"/>
<dbReference type="KEGG" id="sas:SAS1504"/>
<dbReference type="HOGENOM" id="CLU_066632_4_0_9"/>
<dbReference type="GO" id="GO:0043590">
    <property type="term" value="C:bacterial nucleoid"/>
    <property type="evidence" value="ECO:0007669"/>
    <property type="project" value="TreeGrafter"/>
</dbReference>
<dbReference type="GO" id="GO:0006310">
    <property type="term" value="P:DNA recombination"/>
    <property type="evidence" value="ECO:0007669"/>
    <property type="project" value="UniProtKB-UniRule"/>
</dbReference>
<dbReference type="GO" id="GO:0006302">
    <property type="term" value="P:double-strand break repair"/>
    <property type="evidence" value="ECO:0007669"/>
    <property type="project" value="TreeGrafter"/>
</dbReference>
<dbReference type="Gene3D" id="2.40.50.140">
    <property type="entry name" value="Nucleic acid-binding proteins"/>
    <property type="match status" value="1"/>
</dbReference>
<dbReference type="Gene3D" id="1.20.1440.120">
    <property type="entry name" value="Recombination protein O, C-terminal domain"/>
    <property type="match status" value="1"/>
</dbReference>
<dbReference type="HAMAP" id="MF_00201">
    <property type="entry name" value="RecO"/>
    <property type="match status" value="1"/>
</dbReference>
<dbReference type="InterPro" id="IPR037278">
    <property type="entry name" value="ARFGAP/RecO"/>
</dbReference>
<dbReference type="InterPro" id="IPR022572">
    <property type="entry name" value="DNA_rep/recomb_RecO_N"/>
</dbReference>
<dbReference type="InterPro" id="IPR012340">
    <property type="entry name" value="NA-bd_OB-fold"/>
</dbReference>
<dbReference type="InterPro" id="IPR003717">
    <property type="entry name" value="RecO"/>
</dbReference>
<dbReference type="InterPro" id="IPR042242">
    <property type="entry name" value="RecO_C"/>
</dbReference>
<dbReference type="NCBIfam" id="TIGR00613">
    <property type="entry name" value="reco"/>
    <property type="match status" value="1"/>
</dbReference>
<dbReference type="PANTHER" id="PTHR33991">
    <property type="entry name" value="DNA REPAIR PROTEIN RECO"/>
    <property type="match status" value="1"/>
</dbReference>
<dbReference type="PANTHER" id="PTHR33991:SF1">
    <property type="entry name" value="DNA REPAIR PROTEIN RECO"/>
    <property type="match status" value="1"/>
</dbReference>
<dbReference type="Pfam" id="PF02565">
    <property type="entry name" value="RecO_C"/>
    <property type="match status" value="1"/>
</dbReference>
<dbReference type="Pfam" id="PF11967">
    <property type="entry name" value="RecO_N"/>
    <property type="match status" value="1"/>
</dbReference>
<dbReference type="SUPFAM" id="SSF57863">
    <property type="entry name" value="ArfGap/RecO-like zinc finger"/>
    <property type="match status" value="1"/>
</dbReference>
<dbReference type="SUPFAM" id="SSF50249">
    <property type="entry name" value="Nucleic acid-binding proteins"/>
    <property type="match status" value="1"/>
</dbReference>
<sequence length="250" mass="28450">MLMRQKGIIIKAVDYGESDKIITILNEHGAKVPLMARRAKKVKTGLQAQTQLFVYGLFIYNQWRGMGTLNSVDVISQHYKLQMDLFVSSYASLAAETIERSMDEGDIAPYNYQLLQFVLEKIESGTSAQLMSVVVMLKCMKRFGFTASFNRCAVSGNDTQADLIGYSFKFDGAISRQEASKDVHAVILSNKTLYLLDVLQKLPIDKMNSLNIHQEIIDEMSDIILMLYREYAGMFFKSQKLINQLKRLEQ</sequence>
<comment type="function">
    <text evidence="1">Involved in DNA repair and RecF pathway recombination.</text>
</comment>
<comment type="similarity">
    <text evidence="1">Belongs to the RecO family.</text>
</comment>
<accession>Q6G901</accession>
<protein>
    <recommendedName>
        <fullName evidence="1">DNA repair protein RecO</fullName>
    </recommendedName>
    <alternativeName>
        <fullName evidence="1">Recombination protein O</fullName>
    </alternativeName>
</protein>
<feature type="chain" id="PRO_0000204999" description="DNA repair protein RecO">
    <location>
        <begin position="1"/>
        <end position="250"/>
    </location>
</feature>
<organism>
    <name type="scientific">Staphylococcus aureus (strain MSSA476)</name>
    <dbReference type="NCBI Taxonomy" id="282459"/>
    <lineage>
        <taxon>Bacteria</taxon>
        <taxon>Bacillati</taxon>
        <taxon>Bacillota</taxon>
        <taxon>Bacilli</taxon>
        <taxon>Bacillales</taxon>
        <taxon>Staphylococcaceae</taxon>
        <taxon>Staphylococcus</taxon>
    </lineage>
</organism>
<reference key="1">
    <citation type="journal article" date="2004" name="Proc. Natl. Acad. Sci. U.S.A.">
        <title>Complete genomes of two clinical Staphylococcus aureus strains: evidence for the rapid evolution of virulence and drug resistance.</title>
        <authorList>
            <person name="Holden M.T.G."/>
            <person name="Feil E.J."/>
            <person name="Lindsay J.A."/>
            <person name="Peacock S.J."/>
            <person name="Day N.P.J."/>
            <person name="Enright M.C."/>
            <person name="Foster T.J."/>
            <person name="Moore C.E."/>
            <person name="Hurst L."/>
            <person name="Atkin R."/>
            <person name="Barron A."/>
            <person name="Bason N."/>
            <person name="Bentley S.D."/>
            <person name="Chillingworth C."/>
            <person name="Chillingworth T."/>
            <person name="Churcher C."/>
            <person name="Clark L."/>
            <person name="Corton C."/>
            <person name="Cronin A."/>
            <person name="Doggett J."/>
            <person name="Dowd L."/>
            <person name="Feltwell T."/>
            <person name="Hance Z."/>
            <person name="Harris B."/>
            <person name="Hauser H."/>
            <person name="Holroyd S."/>
            <person name="Jagels K."/>
            <person name="James K.D."/>
            <person name="Lennard N."/>
            <person name="Line A."/>
            <person name="Mayes R."/>
            <person name="Moule S."/>
            <person name="Mungall K."/>
            <person name="Ormond D."/>
            <person name="Quail M.A."/>
            <person name="Rabbinowitsch E."/>
            <person name="Rutherford K.M."/>
            <person name="Sanders M."/>
            <person name="Sharp S."/>
            <person name="Simmonds M."/>
            <person name="Stevens K."/>
            <person name="Whitehead S."/>
            <person name="Barrell B.G."/>
            <person name="Spratt B.G."/>
            <person name="Parkhill J."/>
        </authorList>
    </citation>
    <scope>NUCLEOTIDE SEQUENCE [LARGE SCALE GENOMIC DNA]</scope>
    <source>
        <strain>MSSA476</strain>
    </source>
</reference>